<reference key="1">
    <citation type="journal article" date="2004" name="Biochem. Biophys. Res. Commun.">
        <title>Rab7b, a novel lysosome-associated small GTPase, is involved in monocytic differentiation of human acute promyelocytic leukemia cells.</title>
        <authorList>
            <person name="Yang M."/>
            <person name="Chen T."/>
            <person name="Han C."/>
            <person name="Li N."/>
            <person name="Wan T."/>
            <person name="Cao X."/>
        </authorList>
    </citation>
    <scope>NUCLEOTIDE SEQUENCE [MRNA]</scope>
    <scope>SUBCELLULAR LOCATION</scope>
    <scope>TISSUE SPECIFICITY</scope>
</reference>
<reference key="2">
    <citation type="journal article" date="2004" name="Genome Res.">
        <title>The status, quality, and expansion of the NIH full-length cDNA project: the Mammalian Gene Collection (MGC).</title>
        <authorList>
            <consortium name="The MGC Project Team"/>
        </authorList>
    </citation>
    <scope>NUCLEOTIDE SEQUENCE [LARGE SCALE MRNA]</scope>
    <source>
        <tissue>Colon</tissue>
    </source>
</reference>
<reference key="3">
    <citation type="journal article" date="2010" name="Commun. Integr. Biol.">
        <title>Rab7b and receptors trafficking.</title>
        <authorList>
            <person name="Bucci C."/>
            <person name="Bakke O."/>
            <person name="Progida C."/>
        </authorList>
    </citation>
    <scope>REVIEW ON FUNCTION</scope>
</reference>
<reference key="4">
    <citation type="journal article" date="2010" name="J. Cell Sci.">
        <title>Rab7b controls trafficking from endosomes to the TGN.</title>
        <authorList>
            <person name="Progida C."/>
            <person name="Cogli L."/>
            <person name="Piro F."/>
            <person name="De Luca A."/>
            <person name="Bakke O."/>
            <person name="Bucci C."/>
        </authorList>
    </citation>
    <scope>FUNCTION</scope>
    <scope>SUBCELLULAR LOCATION</scope>
</reference>
<reference key="5">
    <citation type="journal article" date="2011" name="J. Mol. Med.">
        <title>Small Rab GTPase Rab7b promotes megakaryocytic differentiation by enhancing IL-6 production and STAT3-GATA-1 association.</title>
        <authorList>
            <person name="He D."/>
            <person name="Chen T."/>
            <person name="Yang M."/>
            <person name="Zhu X."/>
            <person name="Wang C."/>
            <person name="Cao X."/>
            <person name="Cai Z."/>
        </authorList>
    </citation>
    <scope>FUNCTION</scope>
</reference>
<reference key="6">
    <citation type="journal article" date="2011" name="Traffic">
        <title>Rab GTPases regulating phagosome maturation are differentially recruited to mycobacterial phagosomes.</title>
        <authorList>
            <person name="Seto S."/>
            <person name="Tsujimura K."/>
            <person name="Koide Y."/>
        </authorList>
    </citation>
    <scope>SUBCELLULAR LOCATION</scope>
</reference>
<protein>
    <recommendedName>
        <fullName>Ras-related protein Rab-7b</fullName>
    </recommendedName>
</protein>
<keyword id="KW-0968">Cytoplasmic vesicle</keyword>
<keyword id="KW-0967">Endosome</keyword>
<keyword id="KW-0333">Golgi apparatus</keyword>
<keyword id="KW-0342">GTP-binding</keyword>
<keyword id="KW-0449">Lipoprotein</keyword>
<keyword id="KW-0458">Lysosome</keyword>
<keyword id="KW-0472">Membrane</keyword>
<keyword id="KW-0547">Nucleotide-binding</keyword>
<keyword id="KW-0597">Phosphoprotein</keyword>
<keyword id="KW-0636">Prenylation</keyword>
<keyword id="KW-0653">Protein transport</keyword>
<keyword id="KW-1267">Proteomics identification</keyword>
<keyword id="KW-1185">Reference proteome</keyword>
<keyword id="KW-0813">Transport</keyword>
<sequence length="199" mass="22511">MNPRKKVDLKLIIVGAIGVGKTSLLHQYVHKTFYEEYQTTLGASILSKIIILGDTTLKLQIWDTGGQERFRSMVSTFYKGSDGCILAFDVTDLESFEALDIWRGDVLAKIVPMEQSYPMVLLGNKIDLADRKVPQEVAQGWCREKDIPYFEVSAKNDINVVQAFEMLASRALSRYQSILENHLTESIKLSPDQSRSRCC</sequence>
<dbReference type="EMBL" id="AY094596">
    <property type="protein sequence ID" value="AAM22519.1"/>
    <property type="molecule type" value="mRNA"/>
</dbReference>
<dbReference type="EMBL" id="BC017092">
    <property type="protein sequence ID" value="AAH17092.1"/>
    <property type="molecule type" value="mRNA"/>
</dbReference>
<dbReference type="CCDS" id="CCDS73011.1"/>
<dbReference type="RefSeq" id="NP_001157994.1">
    <property type="nucleotide sequence ID" value="NM_001164522.3"/>
</dbReference>
<dbReference type="RefSeq" id="NP_796377.3">
    <property type="nucleotide sequence ID" value="NM_177403.5"/>
</dbReference>
<dbReference type="SMR" id="Q96AH8"/>
<dbReference type="BioGRID" id="130725">
    <property type="interactions" value="15"/>
</dbReference>
<dbReference type="FunCoup" id="Q96AH8">
    <property type="interactions" value="557"/>
</dbReference>
<dbReference type="IntAct" id="Q96AH8">
    <property type="interactions" value="8"/>
</dbReference>
<dbReference type="STRING" id="9606.ENSP00000479762"/>
<dbReference type="iPTMnet" id="Q96AH8"/>
<dbReference type="PhosphoSitePlus" id="Q96AH8"/>
<dbReference type="SwissPalm" id="Q96AH8"/>
<dbReference type="BioMuta" id="RAB7B"/>
<dbReference type="DMDM" id="50401122"/>
<dbReference type="jPOST" id="Q96AH8"/>
<dbReference type="MassIVE" id="Q96AH8"/>
<dbReference type="PaxDb" id="9606-ENSP00000479762"/>
<dbReference type="PeptideAtlas" id="Q96AH8"/>
<dbReference type="ProteomicsDB" id="75966"/>
<dbReference type="TopDownProteomics" id="Q96AH8"/>
<dbReference type="Antibodypedia" id="72889">
    <property type="antibodies" value="141 antibodies from 19 providers"/>
</dbReference>
<dbReference type="DNASU" id="338382"/>
<dbReference type="Ensembl" id="ENST00000617070.5">
    <property type="protein sequence ID" value="ENSP00000482499.1"/>
    <property type="gene ID" value="ENSG00000276600.5"/>
</dbReference>
<dbReference type="Ensembl" id="ENST00000617991.4">
    <property type="protein sequence ID" value="ENSP00000479762.1"/>
    <property type="gene ID" value="ENSG00000276600.5"/>
</dbReference>
<dbReference type="Ensembl" id="ENST00000623597.3">
    <property type="protein sequence ID" value="ENSP00000485468.1"/>
    <property type="gene ID" value="ENSG00000276600.5"/>
</dbReference>
<dbReference type="GeneID" id="338382"/>
<dbReference type="KEGG" id="hsa:338382"/>
<dbReference type="MANE-Select" id="ENST00000617070.5">
    <property type="protein sequence ID" value="ENSP00000482499.1"/>
    <property type="RefSeq nucleotide sequence ID" value="NM_001164522.3"/>
    <property type="RefSeq protein sequence ID" value="NP_001157994.1"/>
</dbReference>
<dbReference type="UCSC" id="uc031vlc.2">
    <property type="organism name" value="human"/>
</dbReference>
<dbReference type="AGR" id="HGNC:30513"/>
<dbReference type="CTD" id="338382"/>
<dbReference type="DisGeNET" id="338382"/>
<dbReference type="GeneCards" id="RAB7B"/>
<dbReference type="HGNC" id="HGNC:30513">
    <property type="gene designation" value="RAB7B"/>
</dbReference>
<dbReference type="HPA" id="ENSG00000276600">
    <property type="expression patterns" value="Tissue enhanced (skin)"/>
</dbReference>
<dbReference type="neXtProt" id="NX_Q96AH8"/>
<dbReference type="OpenTargets" id="ENSG00000276600"/>
<dbReference type="PharmGKB" id="PA134940117"/>
<dbReference type="VEuPathDB" id="HostDB:ENSG00000276600"/>
<dbReference type="eggNOG" id="KOG0394">
    <property type="taxonomic scope" value="Eukaryota"/>
</dbReference>
<dbReference type="GeneTree" id="ENSGT00940000161943"/>
<dbReference type="InParanoid" id="Q96AH8"/>
<dbReference type="OMA" id="MQIWDTG"/>
<dbReference type="OrthoDB" id="1436450at2759"/>
<dbReference type="PAN-GO" id="Q96AH8">
    <property type="GO annotations" value="5 GO annotations based on evolutionary models"/>
</dbReference>
<dbReference type="PhylomeDB" id="Q96AH8"/>
<dbReference type="PathwayCommons" id="Q96AH8"/>
<dbReference type="Reactome" id="R-HSA-8854214">
    <property type="pathway name" value="TBC/RABGAPs"/>
</dbReference>
<dbReference type="Reactome" id="R-HSA-8873719">
    <property type="pathway name" value="RAB geranylgeranylation"/>
</dbReference>
<dbReference type="Reactome" id="R-HSA-8876198">
    <property type="pathway name" value="RAB GEFs exchange GTP for GDP on RABs"/>
</dbReference>
<dbReference type="SignaLink" id="Q96AH8"/>
<dbReference type="BioGRID-ORCS" id="338382">
    <property type="hits" value="1 hit in 105 CRISPR screens"/>
</dbReference>
<dbReference type="ChiTaRS" id="RAB7B">
    <property type="organism name" value="human"/>
</dbReference>
<dbReference type="GeneWiki" id="RAB7B"/>
<dbReference type="GenomeRNAi" id="338382"/>
<dbReference type="Pharos" id="Q96AH8">
    <property type="development level" value="Tbio"/>
</dbReference>
<dbReference type="PRO" id="PR:Q96AH8"/>
<dbReference type="Proteomes" id="UP000005640">
    <property type="component" value="Chromosome 1"/>
</dbReference>
<dbReference type="RNAct" id="Q96AH8">
    <property type="molecule type" value="protein"/>
</dbReference>
<dbReference type="Bgee" id="ENSG00000276600">
    <property type="expression patterns" value="Expressed in upper arm skin and 125 other cell types or tissues"/>
</dbReference>
<dbReference type="ExpressionAtlas" id="Q96AH8">
    <property type="expression patterns" value="baseline and differential"/>
</dbReference>
<dbReference type="GO" id="GO:0005794">
    <property type="term" value="C:Golgi apparatus"/>
    <property type="evidence" value="ECO:0000314"/>
    <property type="project" value="UniProtKB"/>
</dbReference>
<dbReference type="GO" id="GO:0005770">
    <property type="term" value="C:late endosome"/>
    <property type="evidence" value="ECO:0000314"/>
    <property type="project" value="UniProtKB"/>
</dbReference>
<dbReference type="GO" id="GO:0031902">
    <property type="term" value="C:late endosome membrane"/>
    <property type="evidence" value="ECO:0000304"/>
    <property type="project" value="Reactome"/>
</dbReference>
<dbReference type="GO" id="GO:0005764">
    <property type="term" value="C:lysosome"/>
    <property type="evidence" value="ECO:0000314"/>
    <property type="project" value="UniProtKB"/>
</dbReference>
<dbReference type="GO" id="GO:0045335">
    <property type="term" value="C:phagocytic vesicle"/>
    <property type="evidence" value="ECO:0000314"/>
    <property type="project" value="UniProtKB"/>
</dbReference>
<dbReference type="GO" id="GO:0030670">
    <property type="term" value="C:phagocytic vesicle membrane"/>
    <property type="evidence" value="ECO:0007669"/>
    <property type="project" value="UniProtKB-SubCell"/>
</dbReference>
<dbReference type="GO" id="GO:0005802">
    <property type="term" value="C:trans-Golgi network"/>
    <property type="evidence" value="ECO:0000314"/>
    <property type="project" value="UniProtKB"/>
</dbReference>
<dbReference type="GO" id="GO:0005525">
    <property type="term" value="F:GTP binding"/>
    <property type="evidence" value="ECO:0007669"/>
    <property type="project" value="UniProtKB-KW"/>
</dbReference>
<dbReference type="GO" id="GO:0003924">
    <property type="term" value="F:GTPase activity"/>
    <property type="evidence" value="ECO:0007669"/>
    <property type="project" value="InterPro"/>
</dbReference>
<dbReference type="GO" id="GO:0071346">
    <property type="term" value="P:cellular response to type II interferon"/>
    <property type="evidence" value="ECO:0007669"/>
    <property type="project" value="Ensembl"/>
</dbReference>
<dbReference type="GO" id="GO:0008333">
    <property type="term" value="P:endosome to lysosome transport"/>
    <property type="evidence" value="ECO:0000318"/>
    <property type="project" value="GO_Central"/>
</dbReference>
<dbReference type="GO" id="GO:0034499">
    <property type="term" value="P:late endosome to Golgi transport"/>
    <property type="evidence" value="ECO:0000315"/>
    <property type="project" value="UniProtKB"/>
</dbReference>
<dbReference type="GO" id="GO:0034144">
    <property type="term" value="P:negative regulation of toll-like receptor 4 signaling pathway"/>
    <property type="evidence" value="ECO:0000250"/>
    <property type="project" value="UniProtKB"/>
</dbReference>
<dbReference type="GO" id="GO:0034164">
    <property type="term" value="P:negative regulation of toll-like receptor 9 signaling pathway"/>
    <property type="evidence" value="ECO:0000250"/>
    <property type="project" value="UniProtKB"/>
</dbReference>
<dbReference type="GO" id="GO:0090385">
    <property type="term" value="P:phagosome-lysosome fusion"/>
    <property type="evidence" value="ECO:0000318"/>
    <property type="project" value="GO_Central"/>
</dbReference>
<dbReference type="GO" id="GO:0032755">
    <property type="term" value="P:positive regulation of interleukin-6 production"/>
    <property type="evidence" value="ECO:0000315"/>
    <property type="project" value="UniProtKB"/>
</dbReference>
<dbReference type="GO" id="GO:0045654">
    <property type="term" value="P:positive regulation of megakaryocyte differentiation"/>
    <property type="evidence" value="ECO:0000315"/>
    <property type="project" value="UniProtKB"/>
</dbReference>
<dbReference type="GO" id="GO:0051092">
    <property type="term" value="P:positive regulation of NF-kappaB transcription factor activity"/>
    <property type="evidence" value="ECO:0000315"/>
    <property type="project" value="UniProtKB"/>
</dbReference>
<dbReference type="GO" id="GO:0015031">
    <property type="term" value="P:protein transport"/>
    <property type="evidence" value="ECO:0007669"/>
    <property type="project" value="UniProtKB-KW"/>
</dbReference>
<dbReference type="CDD" id="cd00154">
    <property type="entry name" value="Rab"/>
    <property type="match status" value="1"/>
</dbReference>
<dbReference type="FunFam" id="3.40.50.300:FF:000751">
    <property type="entry name" value="Rab family GTPase, putative"/>
    <property type="match status" value="1"/>
</dbReference>
<dbReference type="Gene3D" id="3.40.50.300">
    <property type="entry name" value="P-loop containing nucleotide triphosphate hydrolases"/>
    <property type="match status" value="1"/>
</dbReference>
<dbReference type="InterPro" id="IPR027417">
    <property type="entry name" value="P-loop_NTPase"/>
</dbReference>
<dbReference type="InterPro" id="IPR005225">
    <property type="entry name" value="Small_GTP-bd"/>
</dbReference>
<dbReference type="InterPro" id="IPR001806">
    <property type="entry name" value="Small_GTPase"/>
</dbReference>
<dbReference type="NCBIfam" id="TIGR00231">
    <property type="entry name" value="small_GTP"/>
    <property type="match status" value="1"/>
</dbReference>
<dbReference type="PANTHER" id="PTHR47981">
    <property type="entry name" value="RAB FAMILY"/>
    <property type="match status" value="1"/>
</dbReference>
<dbReference type="PANTHER" id="PTHR47981:SF22">
    <property type="entry name" value="RAS-RELATED PROTEIN RAB-7B"/>
    <property type="match status" value="1"/>
</dbReference>
<dbReference type="Pfam" id="PF00071">
    <property type="entry name" value="Ras"/>
    <property type="match status" value="1"/>
</dbReference>
<dbReference type="PRINTS" id="PR00449">
    <property type="entry name" value="RASTRNSFRMNG"/>
</dbReference>
<dbReference type="SMART" id="SM00175">
    <property type="entry name" value="RAB"/>
    <property type="match status" value="1"/>
</dbReference>
<dbReference type="SMART" id="SM00176">
    <property type="entry name" value="RAN"/>
    <property type="match status" value="1"/>
</dbReference>
<dbReference type="SMART" id="SM00173">
    <property type="entry name" value="RAS"/>
    <property type="match status" value="1"/>
</dbReference>
<dbReference type="SMART" id="SM00174">
    <property type="entry name" value="RHO"/>
    <property type="match status" value="1"/>
</dbReference>
<dbReference type="SUPFAM" id="SSF52540">
    <property type="entry name" value="P-loop containing nucleoside triphosphate hydrolases"/>
    <property type="match status" value="1"/>
</dbReference>
<dbReference type="PROSITE" id="PS51419">
    <property type="entry name" value="RAB"/>
    <property type="match status" value="1"/>
</dbReference>
<comment type="function">
    <text evidence="5 6">Controls vesicular trafficking from endosomes to the trans-Golgi network (TGN). Acts as a negative regulator of TLR9 signaling and can suppress TLR9-triggered TNFA, IL6, and IFNB production in macrophages by promoting TLR9 lysosomal degradation. Also negatively regulates TLR4 signaling in macrophages by promoting lysosomal degradation of TLR4. Promotes megakaryocytic differentiation by increasing NF-kappa-B-dependent IL6 production and subsequently enhancing the association of STAT3 with GATA1. Not involved in the regulation of the EGF- and EGFR degradation pathway.</text>
</comment>
<comment type="interaction">
    <interactant intactId="EBI-3924400">
        <id>Q96AH8</id>
    </interactant>
    <interactant intactId="EBI-743771">
        <id>Q92624</id>
        <label>APPBP2</label>
    </interactant>
    <organismsDiffer>false</organismsDiffer>
    <experiments>3</experiments>
</comment>
<comment type="subcellular location">
    <subcellularLocation>
        <location evidence="5">Late endosome</location>
    </subcellularLocation>
    <subcellularLocation>
        <location evidence="4 5">Lysosome</location>
    </subcellularLocation>
    <subcellularLocation>
        <location evidence="5">Golgi apparatus</location>
    </subcellularLocation>
    <subcellularLocation>
        <location evidence="5">Golgi apparatus</location>
        <location evidence="5">trans-Golgi network</location>
    </subcellularLocation>
    <subcellularLocation>
        <location evidence="7">Cytoplasmic vesicle</location>
        <location evidence="7">Phagosome</location>
    </subcellularLocation>
    <subcellularLocation>
        <location evidence="8">Cytoplasmic vesicle</location>
        <location evidence="8">Phagosome membrane</location>
        <topology evidence="8">Lipid-anchor</topology>
        <orientation evidence="8">Cytoplasmic side</orientation>
    </subcellularLocation>
    <text evidence="7">Recruited to phagosomes containing S.aureus or M.tuberculosis.</text>
</comment>
<comment type="tissue specificity">
    <text evidence="4">Expressed in heart, placenta, lung, skeletal muscle and peripheral blood leukocyte.</text>
</comment>
<comment type="domain">
    <text evidence="2">Switch 1, switch 2 and the interswitch regions are characteristic of Rab GTPases and mediate the interactions with Rab downstream effectors. The switch regions undergo conformational changes upon nucleotide binding which drive interaction with specific sets of effector proteins, with most effectors only binding to GTP-bound Rab.</text>
</comment>
<comment type="similarity">
    <text evidence="8">Belongs to the small GTPase superfamily. Rab family.</text>
</comment>
<accession>Q96AH8</accession>
<name>RAB7B_HUMAN</name>
<proteinExistence type="evidence at protein level"/>
<gene>
    <name type="primary">RAB7B</name>
</gene>
<evidence type="ECO:0000250" key="1"/>
<evidence type="ECO:0000250" key="2">
    <source>
        <dbReference type="UniProtKB" id="P51149"/>
    </source>
</evidence>
<evidence type="ECO:0000250" key="3">
    <source>
        <dbReference type="UniProtKB" id="Q8VEA8"/>
    </source>
</evidence>
<evidence type="ECO:0000269" key="4">
    <source>
    </source>
</evidence>
<evidence type="ECO:0000269" key="5">
    <source>
    </source>
</evidence>
<evidence type="ECO:0000269" key="6">
    <source>
    </source>
</evidence>
<evidence type="ECO:0000269" key="7">
    <source>
    </source>
</evidence>
<evidence type="ECO:0000305" key="8"/>
<feature type="chain" id="PRO_0000121125" description="Ras-related protein Rab-7b">
    <location>
        <begin position="1"/>
        <end position="199"/>
    </location>
</feature>
<feature type="short sequence motif" description="Switch 1" evidence="2">
    <location>
        <begin position="28"/>
        <end position="41"/>
    </location>
</feature>
<feature type="short sequence motif" description="Switch 2" evidence="2">
    <location>
        <begin position="67"/>
        <end position="82"/>
    </location>
</feature>
<feature type="binding site" evidence="1">
    <location>
        <begin position="15"/>
        <end position="22"/>
    </location>
    <ligand>
        <name>GTP</name>
        <dbReference type="ChEBI" id="CHEBI:37565"/>
    </ligand>
</feature>
<feature type="binding site" evidence="1">
    <location>
        <begin position="34"/>
        <end position="40"/>
    </location>
    <ligand>
        <name>GTP</name>
        <dbReference type="ChEBI" id="CHEBI:37565"/>
    </ligand>
</feature>
<feature type="binding site" evidence="1">
    <location>
        <begin position="63"/>
        <end position="67"/>
    </location>
    <ligand>
        <name>GTP</name>
        <dbReference type="ChEBI" id="CHEBI:37565"/>
    </ligand>
</feature>
<feature type="binding site" evidence="1">
    <location>
        <begin position="124"/>
        <end position="127"/>
    </location>
    <ligand>
        <name>GTP</name>
        <dbReference type="ChEBI" id="CHEBI:37565"/>
    </ligand>
</feature>
<feature type="binding site" evidence="1">
    <location>
        <begin position="154"/>
        <end position="155"/>
    </location>
    <ligand>
        <name>GTP</name>
        <dbReference type="ChEBI" id="CHEBI:37565"/>
    </ligand>
</feature>
<feature type="modified residue" description="Phosphoserine" evidence="3">
    <location>
        <position position="186"/>
    </location>
</feature>
<feature type="lipid moiety-binding region" description="S-geranylgeranyl cysteine" evidence="1">
    <location>
        <position position="198"/>
    </location>
</feature>
<feature type="lipid moiety-binding region" description="S-geranylgeranyl cysteine" evidence="1">
    <location>
        <position position="199"/>
    </location>
</feature>
<organism>
    <name type="scientific">Homo sapiens</name>
    <name type="common">Human</name>
    <dbReference type="NCBI Taxonomy" id="9606"/>
    <lineage>
        <taxon>Eukaryota</taxon>
        <taxon>Metazoa</taxon>
        <taxon>Chordata</taxon>
        <taxon>Craniata</taxon>
        <taxon>Vertebrata</taxon>
        <taxon>Euteleostomi</taxon>
        <taxon>Mammalia</taxon>
        <taxon>Eutheria</taxon>
        <taxon>Euarchontoglires</taxon>
        <taxon>Primates</taxon>
        <taxon>Haplorrhini</taxon>
        <taxon>Catarrhini</taxon>
        <taxon>Hominidae</taxon>
        <taxon>Homo</taxon>
    </lineage>
</organism>